<evidence type="ECO:0000255" key="1">
    <source>
        <dbReference type="HAMAP-Rule" id="MF_04003"/>
    </source>
</evidence>
<evidence type="ECO:0000256" key="2">
    <source>
        <dbReference type="SAM" id="MobiDB-lite"/>
    </source>
</evidence>
<organism>
    <name type="scientific">Human papillomavirus 21</name>
    <dbReference type="NCBI Taxonomy" id="31548"/>
    <lineage>
        <taxon>Viruses</taxon>
        <taxon>Monodnaviria</taxon>
        <taxon>Shotokuvirae</taxon>
        <taxon>Cossaviricota</taxon>
        <taxon>Papovaviricetes</taxon>
        <taxon>Zurhausenvirales</taxon>
        <taxon>Papillomaviridae</taxon>
        <taxon>Firstpapillomavirinae</taxon>
        <taxon>Betapapillomavirus</taxon>
        <taxon>Betapapillomavirus 1</taxon>
    </lineage>
</organism>
<gene>
    <name evidence="1" type="primary">L2</name>
</gene>
<reference key="1">
    <citation type="submission" date="1995-10" db="EMBL/GenBank/DDBJ databases">
        <authorList>
            <person name="Delius H."/>
        </authorList>
    </citation>
    <scope>NUCLEOTIDE SEQUENCE [GENOMIC DNA]</scope>
</reference>
<name>VL2_HPV21</name>
<proteinExistence type="inferred from homology"/>
<keyword id="KW-0167">Capsid protein</keyword>
<keyword id="KW-1176">Cytoplasmic inwards viral transport</keyword>
<keyword id="KW-1015">Disulfide bond</keyword>
<keyword id="KW-0238">DNA-binding</keyword>
<keyword id="KW-1039">Host endosome</keyword>
<keyword id="KW-1040">Host Golgi apparatus</keyword>
<keyword id="KW-1048">Host nucleus</keyword>
<keyword id="KW-0945">Host-virus interaction</keyword>
<keyword id="KW-0426">Late protein</keyword>
<keyword id="KW-1177">Microtubular inwards viral transport</keyword>
<keyword id="KW-0597">Phosphoprotein</keyword>
<keyword id="KW-1185">Reference proteome</keyword>
<keyword id="KW-1163">Viral penetration into host nucleus</keyword>
<keyword id="KW-0946">Virion</keyword>
<keyword id="KW-1160">Virus entry into host cell</keyword>
<dbReference type="EMBL" id="U31779">
    <property type="protein sequence ID" value="AAA79399.1"/>
    <property type="molecule type" value="Genomic_DNA"/>
</dbReference>
<dbReference type="Proteomes" id="UP000009165">
    <property type="component" value="Genome"/>
</dbReference>
<dbReference type="GO" id="GO:0043657">
    <property type="term" value="C:host cell"/>
    <property type="evidence" value="ECO:0007669"/>
    <property type="project" value="GOC"/>
</dbReference>
<dbReference type="GO" id="GO:0044174">
    <property type="term" value="C:host cell endosome"/>
    <property type="evidence" value="ECO:0007669"/>
    <property type="project" value="UniProtKB-KW"/>
</dbReference>
<dbReference type="GO" id="GO:0044177">
    <property type="term" value="C:host cell Golgi apparatus"/>
    <property type="evidence" value="ECO:0007669"/>
    <property type="project" value="UniProtKB-SubCell"/>
</dbReference>
<dbReference type="GO" id="GO:0042025">
    <property type="term" value="C:host cell nucleus"/>
    <property type="evidence" value="ECO:0007669"/>
    <property type="project" value="UniProtKB-SubCell"/>
</dbReference>
<dbReference type="GO" id="GO:0019028">
    <property type="term" value="C:viral capsid"/>
    <property type="evidence" value="ECO:0007669"/>
    <property type="project" value="UniProtKB-UniRule"/>
</dbReference>
<dbReference type="GO" id="GO:0003677">
    <property type="term" value="F:DNA binding"/>
    <property type="evidence" value="ECO:0007669"/>
    <property type="project" value="UniProtKB-UniRule"/>
</dbReference>
<dbReference type="GO" id="GO:0005198">
    <property type="term" value="F:structural molecule activity"/>
    <property type="evidence" value="ECO:0007669"/>
    <property type="project" value="UniProtKB-UniRule"/>
</dbReference>
<dbReference type="GO" id="GO:0075521">
    <property type="term" value="P:microtubule-dependent intracellular transport of viral material towards nucleus"/>
    <property type="evidence" value="ECO:0007669"/>
    <property type="project" value="UniProtKB-UniRule"/>
</dbReference>
<dbReference type="GO" id="GO:0046718">
    <property type="term" value="P:symbiont entry into host cell"/>
    <property type="evidence" value="ECO:0007669"/>
    <property type="project" value="UniProtKB-KW"/>
</dbReference>
<dbReference type="GO" id="GO:0075732">
    <property type="term" value="P:viral penetration into host nucleus"/>
    <property type="evidence" value="ECO:0007669"/>
    <property type="project" value="UniProtKB-KW"/>
</dbReference>
<dbReference type="HAMAP" id="MF_04003">
    <property type="entry name" value="PPV_L2"/>
    <property type="match status" value="1"/>
</dbReference>
<dbReference type="InterPro" id="IPR000784">
    <property type="entry name" value="Late_L2"/>
</dbReference>
<dbReference type="Pfam" id="PF00513">
    <property type="entry name" value="Late_protein_L2"/>
    <property type="match status" value="1"/>
</dbReference>
<feature type="chain" id="PRO_0000133588" description="Minor capsid protein L2">
    <location>
        <begin position="1"/>
        <end position="520"/>
    </location>
</feature>
<feature type="region of interest" description="Disordered" evidence="2">
    <location>
        <begin position="139"/>
        <end position="176"/>
    </location>
</feature>
<feature type="short sequence motif" description="Nuclear localization signal" evidence="1">
    <location>
        <begin position="1"/>
        <end position="10"/>
    </location>
</feature>
<feature type="short sequence motif" description="Nuclear localization signal" evidence="1">
    <location>
        <begin position="511"/>
        <end position="519"/>
    </location>
</feature>
<feature type="compositionally biased region" description="Polar residues" evidence="2">
    <location>
        <begin position="151"/>
        <end position="160"/>
    </location>
</feature>
<feature type="disulfide bond" evidence="1">
    <location>
        <begin position="19"/>
        <end position="25"/>
    </location>
</feature>
<comment type="function">
    <text evidence="1">Minor protein of the capsid that localizes along the inner surface of the virion, within the central cavities beneath the L1 pentamers. Plays a role in capsid stabilization through interaction with the major capsid protein L1. Once the virion enters the host cell, L2 escorts the genomic DNA into the nucleus by promoting escape from the endosomal compartments and traffic through the host Golgi network. Mechanistically, the C-terminus of L2 possesses a cell-penetrating peptide that protudes from the host endosome, interacts with host cytoplasmic retromer cargo and thereby mediates the capsid delivery to the host trans-Golgi network. Plays a role through its interaction with host dynein in the intracellular microtubule-dependent transport of viral capsid toward the nucleus. Mediates the viral genome import into the nucleus through binding to host importins. Once within the nucleus, L2 localizes viral genomes to host PML bodies in order to activate early gene expression for establishment of infection. Later on, promotes late gene expression by interacting with the viral E2 protein and by inhibiting its transcriptional activation functions. During virion assembly, encapsidates the genome by direct interaction with the viral DNA.</text>
</comment>
<comment type="subunit">
    <text evidence="1">Interacts with major capsid protein L1. Interacts with E2; this interaction inhibits E2 transcriptional activity but not the DNA replication function E2. Interacts with host GADD45GIP1. Interacts with host HSPA8; this interaction is required for L2 nuclear translocation. Interacts with host importins KPNB2 and KPNB3. Forms a complex with importin alpha2-beta1 heterodimers via interaction with the importin alpha2 adapter. Interacts with host DYNLT1; this interaction is essential for virus intracellular transport during entry. Interacts (via C-terminus) with host retromer subunits VPS35 and VPS29.</text>
</comment>
<comment type="subcellular location">
    <subcellularLocation>
        <location evidence="1">Virion</location>
    </subcellularLocation>
    <subcellularLocation>
        <location evidence="1">Host nucleus</location>
    </subcellularLocation>
    <subcellularLocation>
        <location evidence="1">Host early endosome</location>
    </subcellularLocation>
    <subcellularLocation>
        <location evidence="1">Host Golgi apparatus</location>
    </subcellularLocation>
</comment>
<comment type="PTM">
    <text evidence="1">Highly phosphorylated.</text>
</comment>
<comment type="similarity">
    <text evidence="1">Belongs to the papillomaviridae L2 protein family.</text>
</comment>
<protein>
    <recommendedName>
        <fullName evidence="1">Minor capsid protein L2</fullName>
    </recommendedName>
</protein>
<organismHost>
    <name type="scientific">Homo sapiens</name>
    <name type="common">Human</name>
    <dbReference type="NCBI Taxonomy" id="9606"/>
</organismHost>
<sequence length="520" mass="56900">MARAKRVKRDSATNIYRTCKQAGTCPPDVINKVESTTIADKILQYGSAGVFFGGLGISTGKGTGGTTGYVPLGEGPAVRVGNAPTVIRPALVPDTIGPSDIIPVDTLNPVEPTTSSIVPLTDSTGPDLLPGEVETIAEIHPGPTRPPPDTAVTTSTNGSSAVLEVAPEPTPPSRVRVTRTQYHNPSFQVITESTPTTGESSLADHILVTSGTGGQTIGGSTPELIELQDFPSRYSFEIEEPTPPRRTSTPIQRIQNIIRRRGGGLTNRRLVQQVNVENPLFVSRPSRLVQFQFDNPAFEEEVTQIFEQDIDTFNEPPDRDFLDIKTLGRPQYSETPAGYVRVSRLGKRGTIRTRSGTQIGSQVHFYRDLSTINTEDPIELQLLGEHSGDATIVQGPVESTFIDINVDENPLSEDFSAHSDDLLLDEANEDFSGSQLVVGGRRSTSSYTVPRFETTRSGSYYVQDTKGYYVAYPEDRDTSTDIIYPTPDLPVVIIHTFDTSGDFYLHPSLSRKFKRRRKYL</sequence>
<accession>P50795</accession>